<feature type="chain" id="PRO_0000386057" description="GTPase Obg">
    <location>
        <begin position="1"/>
        <end position="492"/>
    </location>
</feature>
<feature type="domain" description="Obg" evidence="3">
    <location>
        <begin position="2"/>
        <end position="159"/>
    </location>
</feature>
<feature type="domain" description="OBG-type G" evidence="1">
    <location>
        <begin position="160"/>
        <end position="340"/>
    </location>
</feature>
<feature type="domain" description="OCT" evidence="2">
    <location>
        <begin position="358"/>
        <end position="438"/>
    </location>
</feature>
<feature type="region of interest" description="Disordered" evidence="4">
    <location>
        <begin position="441"/>
        <end position="492"/>
    </location>
</feature>
<feature type="compositionally biased region" description="Basic and acidic residues" evidence="4">
    <location>
        <begin position="453"/>
        <end position="469"/>
    </location>
</feature>
<feature type="compositionally biased region" description="Basic and acidic residues" evidence="4">
    <location>
        <begin position="476"/>
        <end position="492"/>
    </location>
</feature>
<feature type="binding site" evidence="1">
    <location>
        <begin position="166"/>
        <end position="173"/>
    </location>
    <ligand>
        <name>GTP</name>
        <dbReference type="ChEBI" id="CHEBI:37565"/>
    </ligand>
</feature>
<feature type="binding site" evidence="1">
    <location>
        <position position="173"/>
    </location>
    <ligand>
        <name>Mg(2+)</name>
        <dbReference type="ChEBI" id="CHEBI:18420"/>
    </ligand>
</feature>
<feature type="binding site" evidence="1">
    <location>
        <begin position="191"/>
        <end position="195"/>
    </location>
    <ligand>
        <name>GTP</name>
        <dbReference type="ChEBI" id="CHEBI:37565"/>
    </ligand>
</feature>
<feature type="binding site" evidence="1">
    <location>
        <position position="193"/>
    </location>
    <ligand>
        <name>Mg(2+)</name>
        <dbReference type="ChEBI" id="CHEBI:18420"/>
    </ligand>
</feature>
<feature type="binding site" evidence="1">
    <location>
        <begin position="212"/>
        <end position="215"/>
    </location>
    <ligand>
        <name>GTP</name>
        <dbReference type="ChEBI" id="CHEBI:37565"/>
    </ligand>
</feature>
<feature type="binding site" evidence="1">
    <location>
        <begin position="292"/>
        <end position="295"/>
    </location>
    <ligand>
        <name>GTP</name>
        <dbReference type="ChEBI" id="CHEBI:37565"/>
    </ligand>
</feature>
<feature type="binding site" evidence="1">
    <location>
        <begin position="321"/>
        <end position="323"/>
    </location>
    <ligand>
        <name>GTP</name>
        <dbReference type="ChEBI" id="CHEBI:37565"/>
    </ligand>
</feature>
<proteinExistence type="inferred from homology"/>
<protein>
    <recommendedName>
        <fullName evidence="1">GTPase Obg</fullName>
        <ecNumber evidence="1">3.6.5.-</ecNumber>
    </recommendedName>
    <alternativeName>
        <fullName evidence="1">GTP-binding protein Obg</fullName>
    </alternativeName>
</protein>
<accession>Q73XP5</accession>
<reference key="1">
    <citation type="journal article" date="2005" name="Proc. Natl. Acad. Sci. U.S.A.">
        <title>The complete genome sequence of Mycobacterium avium subspecies paratuberculosis.</title>
        <authorList>
            <person name="Li L."/>
            <person name="Bannantine J.P."/>
            <person name="Zhang Q."/>
            <person name="Amonsin A."/>
            <person name="May B.J."/>
            <person name="Alt D."/>
            <person name="Banerji N."/>
            <person name="Kanjilal S."/>
            <person name="Kapur V."/>
        </authorList>
    </citation>
    <scope>NUCLEOTIDE SEQUENCE [LARGE SCALE GENOMIC DNA]</scope>
    <source>
        <strain>ATCC BAA-968 / K-10</strain>
    </source>
</reference>
<organism>
    <name type="scientific">Mycolicibacterium paratuberculosis (strain ATCC BAA-968 / K-10)</name>
    <name type="common">Mycobacterium paratuberculosis</name>
    <dbReference type="NCBI Taxonomy" id="262316"/>
    <lineage>
        <taxon>Bacteria</taxon>
        <taxon>Bacillati</taxon>
        <taxon>Actinomycetota</taxon>
        <taxon>Actinomycetes</taxon>
        <taxon>Mycobacteriales</taxon>
        <taxon>Mycobacteriaceae</taxon>
        <taxon>Mycobacterium</taxon>
        <taxon>Mycobacterium avium complex (MAC)</taxon>
    </lineage>
</organism>
<sequence length="492" mass="52251">MPRFVDRVVIHARAGSGGNGCASVHREKFKPLGGPDGGNGGRGGSIVFVVDPQVHTLLDFHFHPHISAPSGKQGMGNNRDGAAGADLEVKVPDGTVVLDENGRLLADLVGAGTRFEAAAGGRGGLGNAALASRARKAPGFALLGEPGETRELTLELKTVADVGLIGFPSAGKSSLVSAISAAKPKIADYPFTTLVPNLGVVSAGEHTFTVADVPGLIPGASAGRGLGLDFLRHIERCAVLVHVIDCATADPGRDPISDIDALEAELAAYTPTLQGDVTLGDLTERPRAVVLNKIDVPEARELAEFVRDEIAERGWPVFLVSTVAREGLQPLIFGLWQMISEYQSAQPEIVPRRPVIRPVPVDDSGFRVEPDPRQPGAFVVSGARPERWVRQTNFDNDEAVGYLADRLARLGVEEELLRLGARPGCAVTIGDMTFDWEPQTPAGQQVVLSGRGTDARLERTERVGAAERKAARRQRRTGDDAERGTTERGENT</sequence>
<name>OBG_MYCPA</name>
<gene>
    <name evidence="1" type="primary">obg</name>
    <name type="ordered locus">MAP_2264c</name>
</gene>
<dbReference type="EC" id="3.6.5.-" evidence="1"/>
<dbReference type="EMBL" id="AE016958">
    <property type="protein sequence ID" value="AAS04581.1"/>
    <property type="molecule type" value="Genomic_DNA"/>
</dbReference>
<dbReference type="SMR" id="Q73XP5"/>
<dbReference type="STRING" id="262316.MAP_2264c"/>
<dbReference type="KEGG" id="mpa:MAP_2264c"/>
<dbReference type="eggNOG" id="COG0536">
    <property type="taxonomic scope" value="Bacteria"/>
</dbReference>
<dbReference type="HOGENOM" id="CLU_011747_2_1_11"/>
<dbReference type="Proteomes" id="UP000000580">
    <property type="component" value="Chromosome"/>
</dbReference>
<dbReference type="GO" id="GO:0005737">
    <property type="term" value="C:cytoplasm"/>
    <property type="evidence" value="ECO:0007669"/>
    <property type="project" value="UniProtKB-SubCell"/>
</dbReference>
<dbReference type="GO" id="GO:0005525">
    <property type="term" value="F:GTP binding"/>
    <property type="evidence" value="ECO:0007669"/>
    <property type="project" value="UniProtKB-UniRule"/>
</dbReference>
<dbReference type="GO" id="GO:0003924">
    <property type="term" value="F:GTPase activity"/>
    <property type="evidence" value="ECO:0007669"/>
    <property type="project" value="UniProtKB-UniRule"/>
</dbReference>
<dbReference type="GO" id="GO:0000287">
    <property type="term" value="F:magnesium ion binding"/>
    <property type="evidence" value="ECO:0007669"/>
    <property type="project" value="InterPro"/>
</dbReference>
<dbReference type="GO" id="GO:0042254">
    <property type="term" value="P:ribosome biogenesis"/>
    <property type="evidence" value="ECO:0007669"/>
    <property type="project" value="UniProtKB-UniRule"/>
</dbReference>
<dbReference type="CDD" id="cd01898">
    <property type="entry name" value="Obg"/>
    <property type="match status" value="1"/>
</dbReference>
<dbReference type="FunFam" id="2.70.210.12:FF:000001">
    <property type="entry name" value="GTPase Obg"/>
    <property type="match status" value="1"/>
</dbReference>
<dbReference type="Gene3D" id="3.30.300.350">
    <property type="entry name" value="GTP-binding protein OBG, C-terminal domain"/>
    <property type="match status" value="1"/>
</dbReference>
<dbReference type="Gene3D" id="2.70.210.12">
    <property type="entry name" value="GTP1/OBG domain"/>
    <property type="match status" value="1"/>
</dbReference>
<dbReference type="Gene3D" id="3.40.50.300">
    <property type="entry name" value="P-loop containing nucleotide triphosphate hydrolases"/>
    <property type="match status" value="1"/>
</dbReference>
<dbReference type="HAMAP" id="MF_01454">
    <property type="entry name" value="GTPase_Obg"/>
    <property type="match status" value="1"/>
</dbReference>
<dbReference type="InterPro" id="IPR031167">
    <property type="entry name" value="G_OBG"/>
</dbReference>
<dbReference type="InterPro" id="IPR006073">
    <property type="entry name" value="GTP-bd"/>
</dbReference>
<dbReference type="InterPro" id="IPR014100">
    <property type="entry name" value="GTP-bd_Obg/CgtA"/>
</dbReference>
<dbReference type="InterPro" id="IPR036346">
    <property type="entry name" value="GTP-bd_prot_GTP1/OBG_C_sf"/>
</dbReference>
<dbReference type="InterPro" id="IPR006074">
    <property type="entry name" value="GTP1-OBG_CS"/>
</dbReference>
<dbReference type="InterPro" id="IPR006169">
    <property type="entry name" value="GTP1_OBG_dom"/>
</dbReference>
<dbReference type="InterPro" id="IPR036726">
    <property type="entry name" value="GTP1_OBG_dom_sf"/>
</dbReference>
<dbReference type="InterPro" id="IPR045086">
    <property type="entry name" value="OBG_GTPase"/>
</dbReference>
<dbReference type="InterPro" id="IPR015349">
    <property type="entry name" value="OCT_dom"/>
</dbReference>
<dbReference type="InterPro" id="IPR027417">
    <property type="entry name" value="P-loop_NTPase"/>
</dbReference>
<dbReference type="NCBIfam" id="TIGR02729">
    <property type="entry name" value="Obg_CgtA"/>
    <property type="match status" value="1"/>
</dbReference>
<dbReference type="NCBIfam" id="TIGR03595">
    <property type="entry name" value="Obg_CgtA_exten"/>
    <property type="match status" value="1"/>
</dbReference>
<dbReference type="NCBIfam" id="NF008954">
    <property type="entry name" value="PRK12296.1"/>
    <property type="match status" value="1"/>
</dbReference>
<dbReference type="NCBIfam" id="NF008955">
    <property type="entry name" value="PRK12297.1"/>
    <property type="match status" value="1"/>
</dbReference>
<dbReference type="NCBIfam" id="NF008956">
    <property type="entry name" value="PRK12299.1"/>
    <property type="match status" value="1"/>
</dbReference>
<dbReference type="PANTHER" id="PTHR11702">
    <property type="entry name" value="DEVELOPMENTALLY REGULATED GTP-BINDING PROTEIN-RELATED"/>
    <property type="match status" value="1"/>
</dbReference>
<dbReference type="PANTHER" id="PTHR11702:SF31">
    <property type="entry name" value="MITOCHONDRIAL RIBOSOME-ASSOCIATED GTPASE 2"/>
    <property type="match status" value="1"/>
</dbReference>
<dbReference type="Pfam" id="PF09269">
    <property type="entry name" value="DUF1967"/>
    <property type="match status" value="1"/>
</dbReference>
<dbReference type="Pfam" id="PF01018">
    <property type="entry name" value="GTP1_OBG"/>
    <property type="match status" value="1"/>
</dbReference>
<dbReference type="Pfam" id="PF01926">
    <property type="entry name" value="MMR_HSR1"/>
    <property type="match status" value="1"/>
</dbReference>
<dbReference type="PRINTS" id="PR00326">
    <property type="entry name" value="GTP1OBG"/>
</dbReference>
<dbReference type="SUPFAM" id="SSF102741">
    <property type="entry name" value="Obg GTP-binding protein C-terminal domain"/>
    <property type="match status" value="1"/>
</dbReference>
<dbReference type="SUPFAM" id="SSF82051">
    <property type="entry name" value="Obg GTP-binding protein N-terminal domain"/>
    <property type="match status" value="1"/>
</dbReference>
<dbReference type="SUPFAM" id="SSF52540">
    <property type="entry name" value="P-loop containing nucleoside triphosphate hydrolases"/>
    <property type="match status" value="1"/>
</dbReference>
<dbReference type="PROSITE" id="PS51710">
    <property type="entry name" value="G_OBG"/>
    <property type="match status" value="1"/>
</dbReference>
<dbReference type="PROSITE" id="PS00905">
    <property type="entry name" value="GTP1_OBG"/>
    <property type="match status" value="1"/>
</dbReference>
<dbReference type="PROSITE" id="PS51883">
    <property type="entry name" value="OBG"/>
    <property type="match status" value="1"/>
</dbReference>
<dbReference type="PROSITE" id="PS51881">
    <property type="entry name" value="OCT"/>
    <property type="match status" value="1"/>
</dbReference>
<evidence type="ECO:0000255" key="1">
    <source>
        <dbReference type="HAMAP-Rule" id="MF_01454"/>
    </source>
</evidence>
<evidence type="ECO:0000255" key="2">
    <source>
        <dbReference type="PROSITE-ProRule" id="PRU01229"/>
    </source>
</evidence>
<evidence type="ECO:0000255" key="3">
    <source>
        <dbReference type="PROSITE-ProRule" id="PRU01231"/>
    </source>
</evidence>
<evidence type="ECO:0000256" key="4">
    <source>
        <dbReference type="SAM" id="MobiDB-lite"/>
    </source>
</evidence>
<keyword id="KW-0963">Cytoplasm</keyword>
<keyword id="KW-0342">GTP-binding</keyword>
<keyword id="KW-0378">Hydrolase</keyword>
<keyword id="KW-0460">Magnesium</keyword>
<keyword id="KW-0479">Metal-binding</keyword>
<keyword id="KW-0547">Nucleotide-binding</keyword>
<keyword id="KW-1185">Reference proteome</keyword>
<comment type="function">
    <text evidence="1">An essential GTPase which binds GTP, GDP and possibly (p)ppGpp with moderate affinity, with high nucleotide exchange rates and a fairly low GTP hydrolysis rate. Plays a role in control of the cell cycle, stress response, ribosome biogenesis and in those bacteria that undergo differentiation, in morphogenesis control.</text>
</comment>
<comment type="cofactor">
    <cofactor evidence="1">
        <name>Mg(2+)</name>
        <dbReference type="ChEBI" id="CHEBI:18420"/>
    </cofactor>
</comment>
<comment type="subunit">
    <text evidence="1">Monomer.</text>
</comment>
<comment type="subcellular location">
    <subcellularLocation>
        <location evidence="1">Cytoplasm</location>
    </subcellularLocation>
</comment>
<comment type="similarity">
    <text evidence="1">Belongs to the TRAFAC class OBG-HflX-like GTPase superfamily. OBG GTPase family.</text>
</comment>